<accession>Q67K93</accession>
<reference key="1">
    <citation type="journal article" date="2004" name="Nucleic Acids Res.">
        <title>Genome sequence of Symbiobacterium thermophilum, an uncultivable bacterium that depends on microbial commensalism.</title>
        <authorList>
            <person name="Ueda K."/>
            <person name="Yamashita A."/>
            <person name="Ishikawa J."/>
            <person name="Shimada M."/>
            <person name="Watsuji T."/>
            <person name="Morimura K."/>
            <person name="Ikeda H."/>
            <person name="Hattori M."/>
            <person name="Beppu T."/>
        </authorList>
    </citation>
    <scope>NUCLEOTIDE SEQUENCE [LARGE SCALE GENOMIC DNA]</scope>
    <source>
        <strain>DSM 24528 / JCM 14929 / IAM 14863 / T</strain>
    </source>
</reference>
<feature type="chain" id="PRO_0000332680" description="Ribonuclease H">
    <location>
        <begin position="1"/>
        <end position="147"/>
    </location>
</feature>
<feature type="domain" description="RNase H type-1" evidence="2">
    <location>
        <begin position="1"/>
        <end position="142"/>
    </location>
</feature>
<feature type="binding site" evidence="1">
    <location>
        <position position="9"/>
    </location>
    <ligand>
        <name>Mg(2+)</name>
        <dbReference type="ChEBI" id="CHEBI:18420"/>
        <label>1</label>
    </ligand>
</feature>
<feature type="binding site" evidence="1">
    <location>
        <position position="9"/>
    </location>
    <ligand>
        <name>Mg(2+)</name>
        <dbReference type="ChEBI" id="CHEBI:18420"/>
        <label>2</label>
    </ligand>
</feature>
<feature type="binding site" evidence="1">
    <location>
        <position position="47"/>
    </location>
    <ligand>
        <name>Mg(2+)</name>
        <dbReference type="ChEBI" id="CHEBI:18420"/>
        <label>1</label>
    </ligand>
</feature>
<feature type="binding site" evidence="1">
    <location>
        <position position="69"/>
    </location>
    <ligand>
        <name>Mg(2+)</name>
        <dbReference type="ChEBI" id="CHEBI:18420"/>
        <label>1</label>
    </ligand>
</feature>
<feature type="binding site" evidence="1">
    <location>
        <position position="134"/>
    </location>
    <ligand>
        <name>Mg(2+)</name>
        <dbReference type="ChEBI" id="CHEBI:18420"/>
        <label>2</label>
    </ligand>
</feature>
<proteinExistence type="inferred from homology"/>
<keyword id="KW-0963">Cytoplasm</keyword>
<keyword id="KW-0255">Endonuclease</keyword>
<keyword id="KW-0378">Hydrolase</keyword>
<keyword id="KW-0460">Magnesium</keyword>
<keyword id="KW-0479">Metal-binding</keyword>
<keyword id="KW-0540">Nuclease</keyword>
<keyword id="KW-1185">Reference proteome</keyword>
<comment type="function">
    <text evidence="1">Endonuclease that specifically degrades the RNA of RNA-DNA hybrids.</text>
</comment>
<comment type="catalytic activity">
    <reaction evidence="1">
        <text>Endonucleolytic cleavage to 5'-phosphomonoester.</text>
        <dbReference type="EC" id="3.1.26.4"/>
    </reaction>
</comment>
<comment type="cofactor">
    <cofactor evidence="1">
        <name>Mg(2+)</name>
        <dbReference type="ChEBI" id="CHEBI:18420"/>
    </cofactor>
    <text evidence="1">Binds 1 Mg(2+) ion per subunit. May bind a second metal ion at a regulatory site, or after substrate binding.</text>
</comment>
<comment type="subunit">
    <text evidence="1">Monomer.</text>
</comment>
<comment type="subcellular location">
    <subcellularLocation>
        <location evidence="1">Cytoplasm</location>
    </subcellularLocation>
</comment>
<comment type="similarity">
    <text evidence="1">Belongs to the RNase H family.</text>
</comment>
<evidence type="ECO:0000255" key="1">
    <source>
        <dbReference type="HAMAP-Rule" id="MF_00042"/>
    </source>
</evidence>
<evidence type="ECO:0000255" key="2">
    <source>
        <dbReference type="PROSITE-ProRule" id="PRU00408"/>
    </source>
</evidence>
<protein>
    <recommendedName>
        <fullName evidence="1">Ribonuclease H</fullName>
        <shortName evidence="1">RNase H</shortName>
        <ecNumber evidence="1">3.1.26.4</ecNumber>
    </recommendedName>
</protein>
<name>RNH_SYMTH</name>
<organism>
    <name type="scientific">Symbiobacterium thermophilum (strain DSM 24528 / JCM 14929 / IAM 14863 / T)</name>
    <dbReference type="NCBI Taxonomy" id="292459"/>
    <lineage>
        <taxon>Bacteria</taxon>
        <taxon>Bacillati</taxon>
        <taxon>Bacillota</taxon>
        <taxon>Clostridia</taxon>
        <taxon>Eubacteriales</taxon>
        <taxon>Symbiobacteriaceae</taxon>
        <taxon>Symbiobacterium</taxon>
    </lineage>
</organism>
<gene>
    <name evidence="1" type="primary">rnhA</name>
    <name type="ordered locus">STH2922</name>
</gene>
<sequence length="147" mass="16584">MREVIIYTDGACSGNPGPGGWGAVLLYGSHRKELSGFHPHTTNNRMEIQAAIEALRALKYPCKVKLYSDSAYLVNAFRQNWLRTWQRNGWVNSRKQPVENQDLWQELLEAARPHQVEWLKVQGHADVAENNRCDELARAAIAAGTQG</sequence>
<dbReference type="EC" id="3.1.26.4" evidence="1"/>
<dbReference type="EMBL" id="AP006840">
    <property type="protein sequence ID" value="BAD41905.1"/>
    <property type="molecule type" value="Genomic_DNA"/>
</dbReference>
<dbReference type="RefSeq" id="WP_011197039.1">
    <property type="nucleotide sequence ID" value="NC_006177.1"/>
</dbReference>
<dbReference type="SMR" id="Q67K93"/>
<dbReference type="STRING" id="292459.STH2922"/>
<dbReference type="KEGG" id="sth:STH2922"/>
<dbReference type="eggNOG" id="COG0328">
    <property type="taxonomic scope" value="Bacteria"/>
</dbReference>
<dbReference type="HOGENOM" id="CLU_030894_6_2_9"/>
<dbReference type="OrthoDB" id="7845843at2"/>
<dbReference type="Proteomes" id="UP000000417">
    <property type="component" value="Chromosome"/>
</dbReference>
<dbReference type="GO" id="GO:0005737">
    <property type="term" value="C:cytoplasm"/>
    <property type="evidence" value="ECO:0007669"/>
    <property type="project" value="UniProtKB-SubCell"/>
</dbReference>
<dbReference type="GO" id="GO:0000287">
    <property type="term" value="F:magnesium ion binding"/>
    <property type="evidence" value="ECO:0007669"/>
    <property type="project" value="UniProtKB-UniRule"/>
</dbReference>
<dbReference type="GO" id="GO:0003676">
    <property type="term" value="F:nucleic acid binding"/>
    <property type="evidence" value="ECO:0007669"/>
    <property type="project" value="InterPro"/>
</dbReference>
<dbReference type="GO" id="GO:0004523">
    <property type="term" value="F:RNA-DNA hybrid ribonuclease activity"/>
    <property type="evidence" value="ECO:0007669"/>
    <property type="project" value="UniProtKB-UniRule"/>
</dbReference>
<dbReference type="GO" id="GO:0043137">
    <property type="term" value="P:DNA replication, removal of RNA primer"/>
    <property type="evidence" value="ECO:0007669"/>
    <property type="project" value="TreeGrafter"/>
</dbReference>
<dbReference type="CDD" id="cd09278">
    <property type="entry name" value="RNase_HI_prokaryote_like"/>
    <property type="match status" value="1"/>
</dbReference>
<dbReference type="FunFam" id="3.30.420.10:FF:000089">
    <property type="entry name" value="Ribonuclease H"/>
    <property type="match status" value="1"/>
</dbReference>
<dbReference type="Gene3D" id="3.30.420.10">
    <property type="entry name" value="Ribonuclease H-like superfamily/Ribonuclease H"/>
    <property type="match status" value="1"/>
</dbReference>
<dbReference type="HAMAP" id="MF_00042">
    <property type="entry name" value="RNase_H"/>
    <property type="match status" value="1"/>
</dbReference>
<dbReference type="InterPro" id="IPR050092">
    <property type="entry name" value="RNase_H"/>
</dbReference>
<dbReference type="InterPro" id="IPR012337">
    <property type="entry name" value="RNaseH-like_sf"/>
</dbReference>
<dbReference type="InterPro" id="IPR002156">
    <property type="entry name" value="RNaseH_domain"/>
</dbReference>
<dbReference type="InterPro" id="IPR036397">
    <property type="entry name" value="RNaseH_sf"/>
</dbReference>
<dbReference type="InterPro" id="IPR022892">
    <property type="entry name" value="RNaseHI"/>
</dbReference>
<dbReference type="NCBIfam" id="NF001236">
    <property type="entry name" value="PRK00203.1"/>
    <property type="match status" value="1"/>
</dbReference>
<dbReference type="PANTHER" id="PTHR10642">
    <property type="entry name" value="RIBONUCLEASE H1"/>
    <property type="match status" value="1"/>
</dbReference>
<dbReference type="PANTHER" id="PTHR10642:SF26">
    <property type="entry name" value="RIBONUCLEASE H1"/>
    <property type="match status" value="1"/>
</dbReference>
<dbReference type="Pfam" id="PF00075">
    <property type="entry name" value="RNase_H"/>
    <property type="match status" value="1"/>
</dbReference>
<dbReference type="SUPFAM" id="SSF53098">
    <property type="entry name" value="Ribonuclease H-like"/>
    <property type="match status" value="1"/>
</dbReference>
<dbReference type="PROSITE" id="PS50879">
    <property type="entry name" value="RNASE_H_1"/>
    <property type="match status" value="1"/>
</dbReference>